<evidence type="ECO:0000255" key="1"/>
<evidence type="ECO:0000256" key="2">
    <source>
        <dbReference type="SAM" id="MobiDB-lite"/>
    </source>
</evidence>
<evidence type="ECO:0000305" key="3"/>
<name>YP69_CAEEL</name>
<keyword id="KW-0472">Membrane</keyword>
<keyword id="KW-1185">Reference proteome</keyword>
<keyword id="KW-0812">Transmembrane</keyword>
<keyword id="KW-1133">Transmembrane helix</keyword>
<sequence length="267" mass="30049">MRSQLLFSTHRLARCFGHRCSIFATTSHENALISTQKSIISMQTRAIHLTSFKFIRARHTDDKQEKNQNEGEDNQKGENKTTDQQDGPKKIDPSVIRKLRIYVLAVAGLSFVTSFIMLSQMFTGDRNSADGLTNEDFTRPGIPMKTFIDKYLKHGEVQRIVFVPNNSRAIAILHRGAVIDGKAASEASVIVEYPQNAQQFWADVRRAEGEIGIGLTEGVQIDLYQGMTTVKMIQLIIGVVILAWLGTQYGRLLRKRLLENQAKKGKN</sequence>
<gene>
    <name type="ORF">B0495.9</name>
</gene>
<organism>
    <name type="scientific">Caenorhabditis elegans</name>
    <dbReference type="NCBI Taxonomy" id="6239"/>
    <lineage>
        <taxon>Eukaryota</taxon>
        <taxon>Metazoa</taxon>
        <taxon>Ecdysozoa</taxon>
        <taxon>Nematoda</taxon>
        <taxon>Chromadorea</taxon>
        <taxon>Rhabditida</taxon>
        <taxon>Rhabditina</taxon>
        <taxon>Rhabditomorpha</taxon>
        <taxon>Rhabditoidea</taxon>
        <taxon>Rhabditidae</taxon>
        <taxon>Peloderinae</taxon>
        <taxon>Caenorhabditis</taxon>
    </lineage>
</organism>
<reference key="1">
    <citation type="journal article" date="1998" name="Science">
        <title>Genome sequence of the nematode C. elegans: a platform for investigating biology.</title>
        <authorList>
            <consortium name="The C. elegans sequencing consortium"/>
        </authorList>
    </citation>
    <scope>NUCLEOTIDE SEQUENCE [LARGE SCALE GENOMIC DNA]</scope>
    <source>
        <strain>Bristol N2</strain>
    </source>
</reference>
<protein>
    <recommendedName>
        <fullName>Uncharacterized protein B0495.9</fullName>
    </recommendedName>
</protein>
<feature type="chain" id="PRO_0000065090" description="Uncharacterized protein B0495.9">
    <location>
        <begin position="1"/>
        <end position="267"/>
    </location>
</feature>
<feature type="transmembrane region" description="Helical" evidence="1">
    <location>
        <begin position="101"/>
        <end position="121"/>
    </location>
</feature>
<feature type="transmembrane region" description="Helical" evidence="1">
    <location>
        <begin position="226"/>
        <end position="246"/>
    </location>
</feature>
<feature type="region of interest" description="Disordered" evidence="2">
    <location>
        <begin position="58"/>
        <end position="90"/>
    </location>
</feature>
<dbReference type="EMBL" id="FO080132">
    <property type="protein sequence ID" value="CCD61478.1"/>
    <property type="molecule type" value="Genomic_DNA"/>
</dbReference>
<dbReference type="PIR" id="F88216">
    <property type="entry name" value="F88216"/>
</dbReference>
<dbReference type="RefSeq" id="NP_495620.1">
    <property type="nucleotide sequence ID" value="NM_063219.7"/>
</dbReference>
<dbReference type="SMR" id="Q09218"/>
<dbReference type="BioGRID" id="39581">
    <property type="interactions" value="1"/>
</dbReference>
<dbReference type="DIP" id="DIP-24322N"/>
<dbReference type="FunCoup" id="Q09218">
    <property type="interactions" value="947"/>
</dbReference>
<dbReference type="STRING" id="6239.B0495.9.1"/>
<dbReference type="PaxDb" id="6239-B0495.9"/>
<dbReference type="PeptideAtlas" id="Q09218"/>
<dbReference type="EnsemblMetazoa" id="B0495.9.1">
    <property type="protein sequence ID" value="B0495.9.1"/>
    <property type="gene ID" value="WBGene00015208"/>
</dbReference>
<dbReference type="GeneID" id="174247"/>
<dbReference type="KEGG" id="cel:CELE_B0495.9"/>
<dbReference type="UCSC" id="B0495.9">
    <property type="organism name" value="c. elegans"/>
</dbReference>
<dbReference type="AGR" id="WB:WBGene00015208"/>
<dbReference type="CTD" id="174247"/>
<dbReference type="WormBase" id="B0495.9">
    <property type="protein sequence ID" value="CE01767"/>
    <property type="gene ID" value="WBGene00015208"/>
</dbReference>
<dbReference type="eggNOG" id="ENOG502SUHX">
    <property type="taxonomic scope" value="Eukaryota"/>
</dbReference>
<dbReference type="HOGENOM" id="CLU_091110_0_0_1"/>
<dbReference type="InParanoid" id="Q09218"/>
<dbReference type="OMA" id="AWLGTQY"/>
<dbReference type="OrthoDB" id="5867382at2759"/>
<dbReference type="PhylomeDB" id="Q09218"/>
<dbReference type="PRO" id="PR:Q09218"/>
<dbReference type="Proteomes" id="UP000001940">
    <property type="component" value="Chromosome II"/>
</dbReference>
<dbReference type="Bgee" id="WBGene00015208">
    <property type="expression patterns" value="Expressed in germ line (C elegans) and 4 other cell types or tissues"/>
</dbReference>
<dbReference type="GO" id="GO:0016020">
    <property type="term" value="C:membrane"/>
    <property type="evidence" value="ECO:0007669"/>
    <property type="project" value="UniProtKB-SubCell"/>
</dbReference>
<dbReference type="Gene3D" id="3.40.1690.20">
    <property type="match status" value="1"/>
</dbReference>
<accession>Q09218</accession>
<proteinExistence type="predicted"/>
<comment type="subcellular location">
    <subcellularLocation>
        <location evidence="3">Membrane</location>
        <topology evidence="3">Multi-pass membrane protein</topology>
    </subcellularLocation>
</comment>